<reference key="1">
    <citation type="journal article" date="2001" name="Proc. Natl. Acad. Sci. U.S.A.">
        <title>Complete genome sequence of Caulobacter crescentus.</title>
        <authorList>
            <person name="Nierman W.C."/>
            <person name="Feldblyum T.V."/>
            <person name="Laub M.T."/>
            <person name="Paulsen I.T."/>
            <person name="Nelson K.E."/>
            <person name="Eisen J.A."/>
            <person name="Heidelberg J.F."/>
            <person name="Alley M.R.K."/>
            <person name="Ohta N."/>
            <person name="Maddock J.R."/>
            <person name="Potocka I."/>
            <person name="Nelson W.C."/>
            <person name="Newton A."/>
            <person name="Stephens C."/>
            <person name="Phadke N.D."/>
            <person name="Ely B."/>
            <person name="DeBoy R.T."/>
            <person name="Dodson R.J."/>
            <person name="Durkin A.S."/>
            <person name="Gwinn M.L."/>
            <person name="Haft D.H."/>
            <person name="Kolonay J.F."/>
            <person name="Smit J."/>
            <person name="Craven M.B."/>
            <person name="Khouri H.M."/>
            <person name="Shetty J."/>
            <person name="Berry K.J."/>
            <person name="Utterback T.R."/>
            <person name="Tran K."/>
            <person name="Wolf A.M."/>
            <person name="Vamathevan J.J."/>
            <person name="Ermolaeva M.D."/>
            <person name="White O."/>
            <person name="Salzberg S.L."/>
            <person name="Venter J.C."/>
            <person name="Shapiro L."/>
            <person name="Fraser C.M."/>
        </authorList>
    </citation>
    <scope>NUCLEOTIDE SEQUENCE [LARGE SCALE GENOMIC DNA]</scope>
    <source>
        <strain>ATCC 19089 / CIP 103742 / CB 15</strain>
    </source>
</reference>
<sequence>MANVTVVGAQWGDEGKGKIVDWLSNRADVVVRFQGGHNAGHTLVVDGKVYKLALLPSGVVQGKLSVIGNGVVVDPWHLLSEIDKIADQGVAITPDLLILADNACLILPLHRDLDQAREAASTQKIGTTGRGIGPAYEDKVGRRAIRVADLADPEALKPKIERLLAHHGALRRGLGLPEANAQELFDALMELAPRILSYAQPAWRVLDQAYKAGRRILFEGAQGSLLDVDHGTYPFVTSSNTAAGQASAGSGMGPSATGFVLGIVKAYTTRVGEGPFPAELFDEVGKHLSTVGREVGVNTGRARRCGWFDSVLVRQSVAINGIHGVALTKLDVLDGLKTLKICVGYKIGDKVVDYLPAGLRDQAAATPVYEEIEGWTESTAGARSFKDLNANAIKYVRRVEELIGAPVALLSTSPERDDTILMRDPFQG</sequence>
<dbReference type="EC" id="6.3.4.4" evidence="1"/>
<dbReference type="EMBL" id="AE005673">
    <property type="protein sequence ID" value="AAK25065.1"/>
    <property type="molecule type" value="Genomic_DNA"/>
</dbReference>
<dbReference type="PIR" id="E87633">
    <property type="entry name" value="E87633"/>
</dbReference>
<dbReference type="RefSeq" id="NP_421897.1">
    <property type="nucleotide sequence ID" value="NC_002696.2"/>
</dbReference>
<dbReference type="RefSeq" id="WP_010920939.1">
    <property type="nucleotide sequence ID" value="NC_002696.2"/>
</dbReference>
<dbReference type="SMR" id="Q9A3U9"/>
<dbReference type="STRING" id="190650.CC_3103"/>
<dbReference type="EnsemblBacteria" id="AAK25065">
    <property type="protein sequence ID" value="AAK25065"/>
    <property type="gene ID" value="CC_3103"/>
</dbReference>
<dbReference type="KEGG" id="ccr:CC_3103"/>
<dbReference type="PATRIC" id="fig|190650.5.peg.3110"/>
<dbReference type="eggNOG" id="COG0104">
    <property type="taxonomic scope" value="Bacteria"/>
</dbReference>
<dbReference type="HOGENOM" id="CLU_029848_0_0_5"/>
<dbReference type="BioCyc" id="CAULO:CC3103-MONOMER"/>
<dbReference type="UniPathway" id="UPA00075">
    <property type="reaction ID" value="UER00335"/>
</dbReference>
<dbReference type="Proteomes" id="UP000001816">
    <property type="component" value="Chromosome"/>
</dbReference>
<dbReference type="GO" id="GO:0005737">
    <property type="term" value="C:cytoplasm"/>
    <property type="evidence" value="ECO:0007669"/>
    <property type="project" value="UniProtKB-SubCell"/>
</dbReference>
<dbReference type="GO" id="GO:0004019">
    <property type="term" value="F:adenylosuccinate synthase activity"/>
    <property type="evidence" value="ECO:0007669"/>
    <property type="project" value="UniProtKB-UniRule"/>
</dbReference>
<dbReference type="GO" id="GO:0005525">
    <property type="term" value="F:GTP binding"/>
    <property type="evidence" value="ECO:0007669"/>
    <property type="project" value="UniProtKB-UniRule"/>
</dbReference>
<dbReference type="GO" id="GO:0000287">
    <property type="term" value="F:magnesium ion binding"/>
    <property type="evidence" value="ECO:0007669"/>
    <property type="project" value="UniProtKB-UniRule"/>
</dbReference>
<dbReference type="GO" id="GO:0044208">
    <property type="term" value="P:'de novo' AMP biosynthetic process"/>
    <property type="evidence" value="ECO:0007669"/>
    <property type="project" value="UniProtKB-UniRule"/>
</dbReference>
<dbReference type="GO" id="GO:0046040">
    <property type="term" value="P:IMP metabolic process"/>
    <property type="evidence" value="ECO:0007669"/>
    <property type="project" value="TreeGrafter"/>
</dbReference>
<dbReference type="CDD" id="cd03108">
    <property type="entry name" value="AdSS"/>
    <property type="match status" value="1"/>
</dbReference>
<dbReference type="FunFam" id="1.10.300.10:FF:000001">
    <property type="entry name" value="Adenylosuccinate synthetase"/>
    <property type="match status" value="1"/>
</dbReference>
<dbReference type="FunFam" id="3.90.170.10:FF:000001">
    <property type="entry name" value="Adenylosuccinate synthetase"/>
    <property type="match status" value="1"/>
</dbReference>
<dbReference type="Gene3D" id="3.40.440.10">
    <property type="entry name" value="Adenylosuccinate Synthetase, subunit A, domain 1"/>
    <property type="match status" value="1"/>
</dbReference>
<dbReference type="Gene3D" id="1.10.300.10">
    <property type="entry name" value="Adenylosuccinate Synthetase, subunit A, domain 2"/>
    <property type="match status" value="1"/>
</dbReference>
<dbReference type="Gene3D" id="3.90.170.10">
    <property type="entry name" value="Adenylosuccinate Synthetase, subunit A, domain 3"/>
    <property type="match status" value="1"/>
</dbReference>
<dbReference type="HAMAP" id="MF_00011">
    <property type="entry name" value="Adenylosucc_synth"/>
    <property type="match status" value="1"/>
</dbReference>
<dbReference type="InterPro" id="IPR018220">
    <property type="entry name" value="Adenylosuccin_syn_GTP-bd"/>
</dbReference>
<dbReference type="InterPro" id="IPR033128">
    <property type="entry name" value="Adenylosuccin_syn_Lys_AS"/>
</dbReference>
<dbReference type="InterPro" id="IPR042109">
    <property type="entry name" value="Adenylosuccinate_synth_dom1"/>
</dbReference>
<dbReference type="InterPro" id="IPR042110">
    <property type="entry name" value="Adenylosuccinate_synth_dom2"/>
</dbReference>
<dbReference type="InterPro" id="IPR042111">
    <property type="entry name" value="Adenylosuccinate_synth_dom3"/>
</dbReference>
<dbReference type="InterPro" id="IPR001114">
    <property type="entry name" value="Adenylosuccinate_synthetase"/>
</dbReference>
<dbReference type="InterPro" id="IPR027417">
    <property type="entry name" value="P-loop_NTPase"/>
</dbReference>
<dbReference type="NCBIfam" id="NF002223">
    <property type="entry name" value="PRK01117.1"/>
    <property type="match status" value="1"/>
</dbReference>
<dbReference type="NCBIfam" id="TIGR00184">
    <property type="entry name" value="purA"/>
    <property type="match status" value="1"/>
</dbReference>
<dbReference type="PANTHER" id="PTHR11846">
    <property type="entry name" value="ADENYLOSUCCINATE SYNTHETASE"/>
    <property type="match status" value="1"/>
</dbReference>
<dbReference type="PANTHER" id="PTHR11846:SF0">
    <property type="entry name" value="ADENYLOSUCCINATE SYNTHETASE"/>
    <property type="match status" value="1"/>
</dbReference>
<dbReference type="Pfam" id="PF00709">
    <property type="entry name" value="Adenylsucc_synt"/>
    <property type="match status" value="1"/>
</dbReference>
<dbReference type="SMART" id="SM00788">
    <property type="entry name" value="Adenylsucc_synt"/>
    <property type="match status" value="1"/>
</dbReference>
<dbReference type="SUPFAM" id="SSF52540">
    <property type="entry name" value="P-loop containing nucleoside triphosphate hydrolases"/>
    <property type="match status" value="1"/>
</dbReference>
<dbReference type="PROSITE" id="PS01266">
    <property type="entry name" value="ADENYLOSUCCIN_SYN_1"/>
    <property type="match status" value="1"/>
</dbReference>
<dbReference type="PROSITE" id="PS00513">
    <property type="entry name" value="ADENYLOSUCCIN_SYN_2"/>
    <property type="match status" value="1"/>
</dbReference>
<accession>Q9A3U9</accession>
<gene>
    <name evidence="1" type="primary">purA</name>
    <name type="ordered locus">CC_3103</name>
</gene>
<keyword id="KW-0963">Cytoplasm</keyword>
<keyword id="KW-0342">GTP-binding</keyword>
<keyword id="KW-0436">Ligase</keyword>
<keyword id="KW-0460">Magnesium</keyword>
<keyword id="KW-0479">Metal-binding</keyword>
<keyword id="KW-0547">Nucleotide-binding</keyword>
<keyword id="KW-0658">Purine biosynthesis</keyword>
<keyword id="KW-1185">Reference proteome</keyword>
<name>PURA_CAUVC</name>
<feature type="chain" id="PRO_0000095163" description="Adenylosuccinate synthetase">
    <location>
        <begin position="1"/>
        <end position="428"/>
    </location>
</feature>
<feature type="active site" description="Proton acceptor" evidence="1">
    <location>
        <position position="13"/>
    </location>
</feature>
<feature type="active site" description="Proton donor" evidence="1">
    <location>
        <position position="41"/>
    </location>
</feature>
<feature type="binding site" evidence="1">
    <location>
        <begin position="12"/>
        <end position="18"/>
    </location>
    <ligand>
        <name>GTP</name>
        <dbReference type="ChEBI" id="CHEBI:37565"/>
    </ligand>
</feature>
<feature type="binding site" description="in other chain" evidence="1">
    <location>
        <begin position="13"/>
        <end position="16"/>
    </location>
    <ligand>
        <name>IMP</name>
        <dbReference type="ChEBI" id="CHEBI:58053"/>
        <note>ligand shared between dimeric partners</note>
    </ligand>
</feature>
<feature type="binding site" evidence="1">
    <location>
        <position position="13"/>
    </location>
    <ligand>
        <name>Mg(2+)</name>
        <dbReference type="ChEBI" id="CHEBI:18420"/>
    </ligand>
</feature>
<feature type="binding site" description="in other chain" evidence="1">
    <location>
        <begin position="38"/>
        <end position="41"/>
    </location>
    <ligand>
        <name>IMP</name>
        <dbReference type="ChEBI" id="CHEBI:58053"/>
        <note>ligand shared between dimeric partners</note>
    </ligand>
</feature>
<feature type="binding site" evidence="1">
    <location>
        <begin position="40"/>
        <end position="42"/>
    </location>
    <ligand>
        <name>GTP</name>
        <dbReference type="ChEBI" id="CHEBI:37565"/>
    </ligand>
</feature>
<feature type="binding site" evidence="1">
    <location>
        <position position="40"/>
    </location>
    <ligand>
        <name>Mg(2+)</name>
        <dbReference type="ChEBI" id="CHEBI:18420"/>
    </ligand>
</feature>
<feature type="binding site" description="in other chain" evidence="1">
    <location>
        <position position="128"/>
    </location>
    <ligand>
        <name>IMP</name>
        <dbReference type="ChEBI" id="CHEBI:58053"/>
        <note>ligand shared between dimeric partners</note>
    </ligand>
</feature>
<feature type="binding site" evidence="1">
    <location>
        <position position="142"/>
    </location>
    <ligand>
        <name>IMP</name>
        <dbReference type="ChEBI" id="CHEBI:58053"/>
        <note>ligand shared between dimeric partners</note>
    </ligand>
</feature>
<feature type="binding site" description="in other chain" evidence="1">
    <location>
        <position position="222"/>
    </location>
    <ligand>
        <name>IMP</name>
        <dbReference type="ChEBI" id="CHEBI:58053"/>
        <note>ligand shared between dimeric partners</note>
    </ligand>
</feature>
<feature type="binding site" description="in other chain" evidence="1">
    <location>
        <position position="237"/>
    </location>
    <ligand>
        <name>IMP</name>
        <dbReference type="ChEBI" id="CHEBI:58053"/>
        <note>ligand shared between dimeric partners</note>
    </ligand>
</feature>
<feature type="binding site" evidence="1">
    <location>
        <begin position="297"/>
        <end position="303"/>
    </location>
    <ligand>
        <name>substrate</name>
    </ligand>
</feature>
<feature type="binding site" description="in other chain" evidence="1">
    <location>
        <position position="301"/>
    </location>
    <ligand>
        <name>IMP</name>
        <dbReference type="ChEBI" id="CHEBI:58053"/>
        <note>ligand shared between dimeric partners</note>
    </ligand>
</feature>
<feature type="binding site" evidence="1">
    <location>
        <position position="303"/>
    </location>
    <ligand>
        <name>GTP</name>
        <dbReference type="ChEBI" id="CHEBI:37565"/>
    </ligand>
</feature>
<feature type="binding site" evidence="1">
    <location>
        <begin position="329"/>
        <end position="331"/>
    </location>
    <ligand>
        <name>GTP</name>
        <dbReference type="ChEBI" id="CHEBI:37565"/>
    </ligand>
</feature>
<feature type="binding site" evidence="1">
    <location>
        <begin position="411"/>
        <end position="413"/>
    </location>
    <ligand>
        <name>GTP</name>
        <dbReference type="ChEBI" id="CHEBI:37565"/>
    </ligand>
</feature>
<protein>
    <recommendedName>
        <fullName evidence="1">Adenylosuccinate synthetase</fullName>
        <shortName evidence="1">AMPSase</shortName>
        <shortName evidence="1">AdSS</shortName>
        <ecNumber evidence="1">6.3.4.4</ecNumber>
    </recommendedName>
    <alternativeName>
        <fullName evidence="1">IMP--aspartate ligase</fullName>
    </alternativeName>
</protein>
<organism>
    <name type="scientific">Caulobacter vibrioides (strain ATCC 19089 / CIP 103742 / CB 15)</name>
    <name type="common">Caulobacter crescentus</name>
    <dbReference type="NCBI Taxonomy" id="190650"/>
    <lineage>
        <taxon>Bacteria</taxon>
        <taxon>Pseudomonadati</taxon>
        <taxon>Pseudomonadota</taxon>
        <taxon>Alphaproteobacteria</taxon>
        <taxon>Caulobacterales</taxon>
        <taxon>Caulobacteraceae</taxon>
        <taxon>Caulobacter</taxon>
    </lineage>
</organism>
<comment type="function">
    <text evidence="1">Plays an important role in the de novo pathway of purine nucleotide biosynthesis. Catalyzes the first committed step in the biosynthesis of AMP from IMP.</text>
</comment>
<comment type="catalytic activity">
    <reaction evidence="1">
        <text>IMP + L-aspartate + GTP = N(6)-(1,2-dicarboxyethyl)-AMP + GDP + phosphate + 2 H(+)</text>
        <dbReference type="Rhea" id="RHEA:15753"/>
        <dbReference type="ChEBI" id="CHEBI:15378"/>
        <dbReference type="ChEBI" id="CHEBI:29991"/>
        <dbReference type="ChEBI" id="CHEBI:37565"/>
        <dbReference type="ChEBI" id="CHEBI:43474"/>
        <dbReference type="ChEBI" id="CHEBI:57567"/>
        <dbReference type="ChEBI" id="CHEBI:58053"/>
        <dbReference type="ChEBI" id="CHEBI:58189"/>
        <dbReference type="EC" id="6.3.4.4"/>
    </reaction>
</comment>
<comment type="cofactor">
    <cofactor evidence="1">
        <name>Mg(2+)</name>
        <dbReference type="ChEBI" id="CHEBI:18420"/>
    </cofactor>
    <text evidence="1">Binds 1 Mg(2+) ion per subunit.</text>
</comment>
<comment type="pathway">
    <text evidence="1">Purine metabolism; AMP biosynthesis via de novo pathway; AMP from IMP: step 1/2.</text>
</comment>
<comment type="subunit">
    <text evidence="1">Homodimer.</text>
</comment>
<comment type="subcellular location">
    <subcellularLocation>
        <location evidence="1">Cytoplasm</location>
    </subcellularLocation>
</comment>
<comment type="similarity">
    <text evidence="1">Belongs to the adenylosuccinate synthetase family.</text>
</comment>
<evidence type="ECO:0000255" key="1">
    <source>
        <dbReference type="HAMAP-Rule" id="MF_00011"/>
    </source>
</evidence>
<proteinExistence type="inferred from homology"/>